<dbReference type="EMBL" id="DQ643392">
    <property type="protein sequence ID" value="ABF82096.1"/>
    <property type="molecule type" value="Genomic_DNA"/>
</dbReference>
<dbReference type="RefSeq" id="YP_654638.1">
    <property type="nucleotide sequence ID" value="NC_008187.1"/>
</dbReference>
<dbReference type="KEGG" id="vg:4156316"/>
<dbReference type="OrthoDB" id="314at10486"/>
<dbReference type="Proteomes" id="UP000001358">
    <property type="component" value="Genome"/>
</dbReference>
<dbReference type="GO" id="GO:0016020">
    <property type="term" value="C:membrane"/>
    <property type="evidence" value="ECO:0007669"/>
    <property type="project" value="UniProtKB-SubCell"/>
</dbReference>
<dbReference type="InterPro" id="IPR043921">
    <property type="entry name" value="DUF5772"/>
</dbReference>
<dbReference type="Pfam" id="PF19080">
    <property type="entry name" value="DUF5772"/>
    <property type="match status" value="1"/>
</dbReference>
<accession>Q196Z4</accession>
<reference key="1">
    <citation type="journal article" date="2006" name="J. Virol.">
        <title>Genome of invertebrate iridescent virus type 3 (mosquito iridescent virus).</title>
        <authorList>
            <person name="Delhon G."/>
            <person name="Tulman E.R."/>
            <person name="Afonso C.L."/>
            <person name="Lu Z."/>
            <person name="Becnel J.J."/>
            <person name="Moser B.A."/>
            <person name="Kutish G.F."/>
            <person name="Rock D.L."/>
        </authorList>
    </citation>
    <scope>NUCLEOTIDE SEQUENCE [LARGE SCALE GENOMIC DNA]</scope>
</reference>
<protein>
    <recommendedName>
        <fullName>Transmembrane protein 066L</fullName>
    </recommendedName>
</protein>
<sequence>MTVTTASGQWTFPVLFATLLVGSALVFPVGGLVWSAIASLAIAYLYYLVVEQHPHVGFALQLLALVVVARAKSWWRQACSGSWLASIVRRRKPTLTVDEYRSTLTYWDPVNKKWYIYTFAHGQRSTDLLIFRDENKRDVTPLVEPLLGPLQNFHGASPTPADLGFARLHVFRDGETSYQRQFDRHEPLVLTPH</sequence>
<evidence type="ECO:0000255" key="1"/>
<evidence type="ECO:0000305" key="2"/>
<comment type="subcellular location">
    <subcellularLocation>
        <location evidence="2">Membrane</location>
        <topology evidence="2">Multi-pass membrane protein</topology>
    </subcellularLocation>
</comment>
<comment type="similarity">
    <text evidence="2">Belongs to the IIV-6 357R family.</text>
</comment>
<proteinExistence type="inferred from homology"/>
<gene>
    <name type="ORF">IIV3-066L</name>
</gene>
<keyword id="KW-0472">Membrane</keyword>
<keyword id="KW-1185">Reference proteome</keyword>
<keyword id="KW-0812">Transmembrane</keyword>
<keyword id="KW-1133">Transmembrane helix</keyword>
<organism>
    <name type="scientific">Invertebrate iridescent virus 3</name>
    <name type="common">IIV-3</name>
    <name type="synonym">Mosquito iridescent virus</name>
    <dbReference type="NCBI Taxonomy" id="345201"/>
    <lineage>
        <taxon>Viruses</taxon>
        <taxon>Varidnaviria</taxon>
        <taxon>Bamfordvirae</taxon>
        <taxon>Nucleocytoviricota</taxon>
        <taxon>Megaviricetes</taxon>
        <taxon>Pimascovirales</taxon>
        <taxon>Iridoviridae</taxon>
        <taxon>Betairidovirinae</taxon>
        <taxon>Chloriridovirus</taxon>
    </lineage>
</organism>
<organismHost>
    <name type="scientific">Aedes vexans</name>
    <name type="common">Inland floodwater mosquito</name>
    <name type="synonym">Culex vexans</name>
    <dbReference type="NCBI Taxonomy" id="7163"/>
</organismHost>
<organismHost>
    <name type="scientific">Culex territans</name>
    <dbReference type="NCBI Taxonomy" id="42431"/>
</organismHost>
<organismHost>
    <name type="scientific">Culiseta annulata</name>
    <dbReference type="NCBI Taxonomy" id="332058"/>
</organismHost>
<organismHost>
    <name type="scientific">Ochlerotatus sollicitans</name>
    <name type="common">eastern saltmarsh mosquito</name>
    <dbReference type="NCBI Taxonomy" id="310513"/>
</organismHost>
<organismHost>
    <name type="scientific">Ochlerotatus taeniorhynchus</name>
    <name type="common">Black salt marsh mosquito</name>
    <name type="synonym">Aedes taeniorhynchus</name>
    <dbReference type="NCBI Taxonomy" id="329105"/>
</organismHost>
<organismHost>
    <name type="scientific">Psorophora ferox</name>
    <dbReference type="NCBI Taxonomy" id="7183"/>
</organismHost>
<feature type="chain" id="PRO_0000377788" description="Transmembrane protein 066L">
    <location>
        <begin position="1"/>
        <end position="193"/>
    </location>
</feature>
<feature type="transmembrane region" description="Helical" evidence="1">
    <location>
        <begin position="14"/>
        <end position="34"/>
    </location>
</feature>
<feature type="transmembrane region" description="Helical" evidence="1">
    <location>
        <begin position="48"/>
        <end position="68"/>
    </location>
</feature>
<name>VF357_IIV3</name>